<proteinExistence type="evidence at protein level"/>
<sequence length="178" mass="19204">MLRTALRGAPRLLSRVQPRAPCLRRLWGRGARPEVAGRRRAWAWGWRRSSSEQGPGPAAALGRVEAAHYQLVYTCKVCGTRSSKRISKLAYHQGVVIVTCPGCQNHHIIADNLGWFSDLNGKRNIEEILTARGEQVHRVAGEGALELVLEAAGAPTSTAAPEAGEDEGPPSPGKTEPS</sequence>
<comment type="function">
    <text evidence="4">May function as a co-chaperone towards HSPA9/mortalin which, by itself, is prone to self-aggregation.</text>
</comment>
<comment type="subunit">
    <text evidence="4">Oligomerizes in a concentration-dependent fashion. Interacts with HSPA9.</text>
</comment>
<comment type="subcellular location">
    <subcellularLocation>
        <location evidence="4">Mitochondrion</location>
    </subcellularLocation>
</comment>
<name>DNLZ_HUMAN</name>
<gene>
    <name type="primary">DNLZ</name>
    <name type="synonym">C9orf151</name>
</gene>
<protein>
    <recommendedName>
        <fullName>DNL-type zinc finger protein</fullName>
    </recommendedName>
    <alternativeName>
        <fullName>Hsp70-escort protein 1</fullName>
        <shortName>HEP1</shortName>
    </alternativeName>
    <alternativeName>
        <fullName>mtHsp70-escort protein</fullName>
    </alternativeName>
</protein>
<reference key="1">
    <citation type="journal article" date="2004" name="Nature">
        <title>DNA sequence and analysis of human chromosome 9.</title>
        <authorList>
            <person name="Humphray S.J."/>
            <person name="Oliver K."/>
            <person name="Hunt A.R."/>
            <person name="Plumb R.W."/>
            <person name="Loveland J.E."/>
            <person name="Howe K.L."/>
            <person name="Andrews T.D."/>
            <person name="Searle S."/>
            <person name="Hunt S.E."/>
            <person name="Scott C.E."/>
            <person name="Jones M.C."/>
            <person name="Ainscough R."/>
            <person name="Almeida J.P."/>
            <person name="Ambrose K.D."/>
            <person name="Ashwell R.I.S."/>
            <person name="Babbage A.K."/>
            <person name="Babbage S."/>
            <person name="Bagguley C.L."/>
            <person name="Bailey J."/>
            <person name="Banerjee R."/>
            <person name="Barker D.J."/>
            <person name="Barlow K.F."/>
            <person name="Bates K."/>
            <person name="Beasley H."/>
            <person name="Beasley O."/>
            <person name="Bird C.P."/>
            <person name="Bray-Allen S."/>
            <person name="Brown A.J."/>
            <person name="Brown J.Y."/>
            <person name="Burford D."/>
            <person name="Burrill W."/>
            <person name="Burton J."/>
            <person name="Carder C."/>
            <person name="Carter N.P."/>
            <person name="Chapman J.C."/>
            <person name="Chen Y."/>
            <person name="Clarke G."/>
            <person name="Clark S.Y."/>
            <person name="Clee C.M."/>
            <person name="Clegg S."/>
            <person name="Collier R.E."/>
            <person name="Corby N."/>
            <person name="Crosier M."/>
            <person name="Cummings A.T."/>
            <person name="Davies J."/>
            <person name="Dhami P."/>
            <person name="Dunn M."/>
            <person name="Dutta I."/>
            <person name="Dyer L.W."/>
            <person name="Earthrowl M.E."/>
            <person name="Faulkner L."/>
            <person name="Fleming C.J."/>
            <person name="Frankish A."/>
            <person name="Frankland J.A."/>
            <person name="French L."/>
            <person name="Fricker D.G."/>
            <person name="Garner P."/>
            <person name="Garnett J."/>
            <person name="Ghori J."/>
            <person name="Gilbert J.G.R."/>
            <person name="Glison C."/>
            <person name="Grafham D.V."/>
            <person name="Gribble S."/>
            <person name="Griffiths C."/>
            <person name="Griffiths-Jones S."/>
            <person name="Grocock R."/>
            <person name="Guy J."/>
            <person name="Hall R.E."/>
            <person name="Hammond S."/>
            <person name="Harley J.L."/>
            <person name="Harrison E.S.I."/>
            <person name="Hart E.A."/>
            <person name="Heath P.D."/>
            <person name="Henderson C.D."/>
            <person name="Hopkins B.L."/>
            <person name="Howard P.J."/>
            <person name="Howden P.J."/>
            <person name="Huckle E."/>
            <person name="Johnson C."/>
            <person name="Johnson D."/>
            <person name="Joy A.A."/>
            <person name="Kay M."/>
            <person name="Keenan S."/>
            <person name="Kershaw J.K."/>
            <person name="Kimberley A.M."/>
            <person name="King A."/>
            <person name="Knights A."/>
            <person name="Laird G.K."/>
            <person name="Langford C."/>
            <person name="Lawlor S."/>
            <person name="Leongamornlert D.A."/>
            <person name="Leversha M."/>
            <person name="Lloyd C."/>
            <person name="Lloyd D.M."/>
            <person name="Lovell J."/>
            <person name="Martin S."/>
            <person name="Mashreghi-Mohammadi M."/>
            <person name="Matthews L."/>
            <person name="McLaren S."/>
            <person name="McLay K.E."/>
            <person name="McMurray A."/>
            <person name="Milne S."/>
            <person name="Nickerson T."/>
            <person name="Nisbett J."/>
            <person name="Nordsiek G."/>
            <person name="Pearce A.V."/>
            <person name="Peck A.I."/>
            <person name="Porter K.M."/>
            <person name="Pandian R."/>
            <person name="Pelan S."/>
            <person name="Phillimore B."/>
            <person name="Povey S."/>
            <person name="Ramsey Y."/>
            <person name="Rand V."/>
            <person name="Scharfe M."/>
            <person name="Sehra H.K."/>
            <person name="Shownkeen R."/>
            <person name="Sims S.K."/>
            <person name="Skuce C.D."/>
            <person name="Smith M."/>
            <person name="Steward C.A."/>
            <person name="Swarbreck D."/>
            <person name="Sycamore N."/>
            <person name="Tester J."/>
            <person name="Thorpe A."/>
            <person name="Tracey A."/>
            <person name="Tromans A."/>
            <person name="Thomas D.W."/>
            <person name="Wall M."/>
            <person name="Wallis J.M."/>
            <person name="West A.P."/>
            <person name="Whitehead S.L."/>
            <person name="Willey D.L."/>
            <person name="Williams S.A."/>
            <person name="Wilming L."/>
            <person name="Wray P.W."/>
            <person name="Young L."/>
            <person name="Ashurst J.L."/>
            <person name="Coulson A."/>
            <person name="Blocker H."/>
            <person name="Durbin R.M."/>
            <person name="Sulston J.E."/>
            <person name="Hubbard T."/>
            <person name="Jackson M.J."/>
            <person name="Bentley D.R."/>
            <person name="Beck S."/>
            <person name="Rogers J."/>
            <person name="Dunham I."/>
        </authorList>
    </citation>
    <scope>NUCLEOTIDE SEQUENCE [LARGE SCALE GENOMIC DNA]</scope>
</reference>
<reference key="2">
    <citation type="journal article" date="2004" name="Genome Res.">
        <title>The status, quality, and expansion of the NIH full-length cDNA project: the Mammalian Gene Collection (MGC).</title>
        <authorList>
            <consortium name="The MGC Project Team"/>
        </authorList>
    </citation>
    <scope>NUCLEOTIDE SEQUENCE [LARGE SCALE MRNA]</scope>
    <source>
        <tissue>Brain</tissue>
        <tissue>Testis</tissue>
    </source>
</reference>
<reference key="3">
    <citation type="journal article" date="2013" name="Int. J. Biol. Macromol.">
        <title>Structural and stability studies of the human mtHsp70-escort protein 1: An essential mortalin co-chaperone.</title>
        <authorList>
            <person name="Dores-Silva P.R."/>
            <person name="Minari K."/>
            <person name="Ramos C.H."/>
            <person name="Barbosa L.R."/>
            <person name="Borges J.C."/>
        </authorList>
    </citation>
    <scope>FUNCTION</scope>
    <scope>SUBCELLULAR LOCATION</scope>
    <scope>SUBUNIT</scope>
</reference>
<reference key="4">
    <citation type="journal article" date="2014" name="J. Proteomics">
        <title>An enzyme assisted RP-RPLC approach for in-depth analysis of human liver phosphoproteome.</title>
        <authorList>
            <person name="Bian Y."/>
            <person name="Song C."/>
            <person name="Cheng K."/>
            <person name="Dong M."/>
            <person name="Wang F."/>
            <person name="Huang J."/>
            <person name="Sun D."/>
            <person name="Wang L."/>
            <person name="Ye M."/>
            <person name="Zou H."/>
        </authorList>
    </citation>
    <scope>IDENTIFICATION BY MASS SPECTROMETRY [LARGE SCALE ANALYSIS]</scope>
    <source>
        <tissue>Liver</tissue>
    </source>
</reference>
<accession>Q5SXM8</accession>
<accession>B2RUX5</accession>
<accession>B9EJE1</accession>
<organism>
    <name type="scientific">Homo sapiens</name>
    <name type="common">Human</name>
    <dbReference type="NCBI Taxonomy" id="9606"/>
    <lineage>
        <taxon>Eukaryota</taxon>
        <taxon>Metazoa</taxon>
        <taxon>Chordata</taxon>
        <taxon>Craniata</taxon>
        <taxon>Vertebrata</taxon>
        <taxon>Euteleostomi</taxon>
        <taxon>Mammalia</taxon>
        <taxon>Eutheria</taxon>
        <taxon>Euarchontoglires</taxon>
        <taxon>Primates</taxon>
        <taxon>Haplorrhini</taxon>
        <taxon>Catarrhini</taxon>
        <taxon>Hominidae</taxon>
        <taxon>Homo</taxon>
    </lineage>
</organism>
<keyword id="KW-0143">Chaperone</keyword>
<keyword id="KW-0479">Metal-binding</keyword>
<keyword id="KW-0496">Mitochondrion</keyword>
<keyword id="KW-1267">Proteomics identification</keyword>
<keyword id="KW-1185">Reference proteome</keyword>
<keyword id="KW-0809">Transit peptide</keyword>
<keyword id="KW-0862">Zinc</keyword>
<keyword id="KW-0863">Zinc-finger</keyword>
<evidence type="ECO:0000255" key="1"/>
<evidence type="ECO:0000255" key="2">
    <source>
        <dbReference type="PROSITE-ProRule" id="PRU00834"/>
    </source>
</evidence>
<evidence type="ECO:0000256" key="3">
    <source>
        <dbReference type="SAM" id="MobiDB-lite"/>
    </source>
</evidence>
<evidence type="ECO:0000269" key="4">
    <source>
    </source>
</evidence>
<dbReference type="EMBL" id="AL592301">
    <property type="status" value="NOT_ANNOTATED_CDS"/>
    <property type="molecule type" value="Genomic_DNA"/>
</dbReference>
<dbReference type="EMBL" id="BC146915">
    <property type="protein sequence ID" value="AAI46916.1"/>
    <property type="molecule type" value="mRNA"/>
</dbReference>
<dbReference type="EMBL" id="BC146924">
    <property type="protein sequence ID" value="AAI46925.1"/>
    <property type="molecule type" value="mRNA"/>
</dbReference>
<dbReference type="CCDS" id="CCDS35179.1"/>
<dbReference type="RefSeq" id="NP_001074318.1">
    <property type="nucleotide sequence ID" value="NM_001080849.3"/>
</dbReference>
<dbReference type="SMR" id="Q5SXM8"/>
<dbReference type="BioGRID" id="608915">
    <property type="interactions" value="36"/>
</dbReference>
<dbReference type="FunCoup" id="Q5SXM8">
    <property type="interactions" value="980"/>
</dbReference>
<dbReference type="IntAct" id="Q5SXM8">
    <property type="interactions" value="32"/>
</dbReference>
<dbReference type="STRING" id="9606.ENSP00000360803"/>
<dbReference type="iPTMnet" id="Q5SXM8"/>
<dbReference type="PhosphoSitePlus" id="Q5SXM8"/>
<dbReference type="SwissPalm" id="Q5SXM8"/>
<dbReference type="BioMuta" id="DNLZ"/>
<dbReference type="DMDM" id="74743980"/>
<dbReference type="jPOST" id="Q5SXM8"/>
<dbReference type="MassIVE" id="Q5SXM8"/>
<dbReference type="PaxDb" id="9606-ENSP00000360803"/>
<dbReference type="PeptideAtlas" id="Q5SXM8"/>
<dbReference type="ProteomicsDB" id="63998"/>
<dbReference type="Pumba" id="Q5SXM8"/>
<dbReference type="Antibodypedia" id="77454">
    <property type="antibodies" value="5 antibodies from 5 providers"/>
</dbReference>
<dbReference type="DNASU" id="728489"/>
<dbReference type="Ensembl" id="ENST00000371738.4">
    <property type="protein sequence ID" value="ENSP00000360803.3"/>
    <property type="gene ID" value="ENSG00000213221.5"/>
</dbReference>
<dbReference type="GeneID" id="728489"/>
<dbReference type="KEGG" id="hsa:728489"/>
<dbReference type="MANE-Select" id="ENST00000371738.4">
    <property type="protein sequence ID" value="ENSP00000360803.3"/>
    <property type="RefSeq nucleotide sequence ID" value="NM_001080849.3"/>
    <property type="RefSeq protein sequence ID" value="NP_001074318.1"/>
</dbReference>
<dbReference type="UCSC" id="uc004chf.3">
    <property type="organism name" value="human"/>
</dbReference>
<dbReference type="AGR" id="HGNC:33879"/>
<dbReference type="CTD" id="728489"/>
<dbReference type="DisGeNET" id="728489"/>
<dbReference type="GeneCards" id="DNLZ"/>
<dbReference type="HGNC" id="HGNC:33879">
    <property type="gene designation" value="DNLZ"/>
</dbReference>
<dbReference type="HPA" id="ENSG00000213221">
    <property type="expression patterns" value="Low tissue specificity"/>
</dbReference>
<dbReference type="MIM" id="620797">
    <property type="type" value="gene"/>
</dbReference>
<dbReference type="neXtProt" id="NX_Q5SXM8"/>
<dbReference type="OpenTargets" id="ENSG00000213221"/>
<dbReference type="PharmGKB" id="PA162384018"/>
<dbReference type="VEuPathDB" id="HostDB:ENSG00000213221"/>
<dbReference type="eggNOG" id="KOG3277">
    <property type="taxonomic scope" value="Eukaryota"/>
</dbReference>
<dbReference type="GeneTree" id="ENSGT00390000008220"/>
<dbReference type="HOGENOM" id="CLU_093902_5_0_1"/>
<dbReference type="InParanoid" id="Q5SXM8"/>
<dbReference type="OMA" id="HPGKTEP"/>
<dbReference type="OrthoDB" id="512667at2759"/>
<dbReference type="PAN-GO" id="Q5SXM8">
    <property type="GO annotations" value="5 GO annotations based on evolutionary models"/>
</dbReference>
<dbReference type="PhylomeDB" id="Q5SXM8"/>
<dbReference type="TreeFam" id="TF313165"/>
<dbReference type="PathwayCommons" id="Q5SXM8"/>
<dbReference type="SignaLink" id="Q5SXM8"/>
<dbReference type="BioGRID-ORCS" id="728489">
    <property type="hits" value="388 hits in 1173 CRISPR screens"/>
</dbReference>
<dbReference type="ChiTaRS" id="DNLZ">
    <property type="organism name" value="human"/>
</dbReference>
<dbReference type="GenomeRNAi" id="728489"/>
<dbReference type="Pharos" id="Q5SXM8">
    <property type="development level" value="Tdark"/>
</dbReference>
<dbReference type="PRO" id="PR:Q5SXM8"/>
<dbReference type="Proteomes" id="UP000005640">
    <property type="component" value="Chromosome 9"/>
</dbReference>
<dbReference type="RNAct" id="Q5SXM8">
    <property type="molecule type" value="protein"/>
</dbReference>
<dbReference type="Bgee" id="ENSG00000213221">
    <property type="expression patterns" value="Expressed in primordial germ cell in gonad and 95 other cell types or tissues"/>
</dbReference>
<dbReference type="ExpressionAtlas" id="Q5SXM8">
    <property type="expression patterns" value="baseline and differential"/>
</dbReference>
<dbReference type="GO" id="GO:0005829">
    <property type="term" value="C:cytosol"/>
    <property type="evidence" value="ECO:0000314"/>
    <property type="project" value="FlyBase"/>
</dbReference>
<dbReference type="GO" id="GO:0005739">
    <property type="term" value="C:mitochondrion"/>
    <property type="evidence" value="ECO:0000314"/>
    <property type="project" value="FlyBase"/>
</dbReference>
<dbReference type="GO" id="GO:0005654">
    <property type="term" value="C:nucleoplasm"/>
    <property type="evidence" value="ECO:0000314"/>
    <property type="project" value="HPA"/>
</dbReference>
<dbReference type="GO" id="GO:0005634">
    <property type="term" value="C:nucleus"/>
    <property type="evidence" value="ECO:0000314"/>
    <property type="project" value="FlyBase"/>
</dbReference>
<dbReference type="GO" id="GO:0044183">
    <property type="term" value="F:protein folding chaperone"/>
    <property type="evidence" value="ECO:0000314"/>
    <property type="project" value="FlyBase"/>
</dbReference>
<dbReference type="GO" id="GO:0051087">
    <property type="term" value="F:protein-folding chaperone binding"/>
    <property type="evidence" value="ECO:0000318"/>
    <property type="project" value="GO_Central"/>
</dbReference>
<dbReference type="GO" id="GO:0008270">
    <property type="term" value="F:zinc ion binding"/>
    <property type="evidence" value="ECO:0007669"/>
    <property type="project" value="UniProtKB-KW"/>
</dbReference>
<dbReference type="GO" id="GO:0051131">
    <property type="term" value="P:chaperone-mediated protein complex assembly"/>
    <property type="evidence" value="ECO:0000314"/>
    <property type="project" value="FlyBase"/>
</dbReference>
<dbReference type="GO" id="GO:0006457">
    <property type="term" value="P:protein folding"/>
    <property type="evidence" value="ECO:0000318"/>
    <property type="project" value="GO_Central"/>
</dbReference>
<dbReference type="GO" id="GO:0030150">
    <property type="term" value="P:protein import into mitochondrial matrix"/>
    <property type="evidence" value="ECO:0000318"/>
    <property type="project" value="GO_Central"/>
</dbReference>
<dbReference type="GO" id="GO:0050821">
    <property type="term" value="P:protein stabilization"/>
    <property type="evidence" value="ECO:0000318"/>
    <property type="project" value="GO_Central"/>
</dbReference>
<dbReference type="InterPro" id="IPR024158">
    <property type="entry name" value="Mt_import_TIM15"/>
</dbReference>
<dbReference type="InterPro" id="IPR007853">
    <property type="entry name" value="Znf_DNL-typ"/>
</dbReference>
<dbReference type="PANTHER" id="PTHR20922">
    <property type="entry name" value="DNL-TYPE ZINC FINGER PROTEIN"/>
    <property type="match status" value="1"/>
</dbReference>
<dbReference type="PANTHER" id="PTHR20922:SF13">
    <property type="entry name" value="DNL-TYPE ZINC FINGER PROTEIN"/>
    <property type="match status" value="1"/>
</dbReference>
<dbReference type="Pfam" id="PF05180">
    <property type="entry name" value="zf-DNL"/>
    <property type="match status" value="1"/>
</dbReference>
<dbReference type="PROSITE" id="PS51501">
    <property type="entry name" value="ZF_DNL"/>
    <property type="match status" value="1"/>
</dbReference>
<feature type="transit peptide" description="Mitochondrion" evidence="1">
    <location>
        <begin position="1"/>
        <end position="49"/>
    </location>
</feature>
<feature type="chain" id="PRO_0000317166" description="DNL-type zinc finger protein">
    <location>
        <begin position="50"/>
        <end position="178"/>
    </location>
</feature>
<feature type="zinc finger region" description="DNL-type" evidence="2">
    <location>
        <begin position="64"/>
        <end position="161"/>
    </location>
</feature>
<feature type="region of interest" description="Disordered" evidence="3">
    <location>
        <begin position="151"/>
        <end position="178"/>
    </location>
</feature>
<feature type="binding site" evidence="2">
    <location>
        <position position="75"/>
    </location>
    <ligand>
        <name>Zn(2+)</name>
        <dbReference type="ChEBI" id="CHEBI:29105"/>
    </ligand>
</feature>
<feature type="binding site" evidence="2">
    <location>
        <position position="78"/>
    </location>
    <ligand>
        <name>Zn(2+)</name>
        <dbReference type="ChEBI" id="CHEBI:29105"/>
    </ligand>
</feature>
<feature type="binding site" evidence="2">
    <location>
        <position position="100"/>
    </location>
    <ligand>
        <name>Zn(2+)</name>
        <dbReference type="ChEBI" id="CHEBI:29105"/>
    </ligand>
</feature>
<feature type="binding site" evidence="2">
    <location>
        <position position="103"/>
    </location>
    <ligand>
        <name>Zn(2+)</name>
        <dbReference type="ChEBI" id="CHEBI:29105"/>
    </ligand>
</feature>
<feature type="sequence variant" id="VAR_053993" description="In dbSNP:rs3812553.">
    <original>P</original>
    <variation>H</variation>
    <location>
        <position position="169"/>
    </location>
</feature>
<feature type="sequence variant" id="VAR_053994" description="In dbSNP:rs3812552.">
    <original>S</original>
    <variation>T</variation>
    <location>
        <position position="178"/>
    </location>
</feature>